<accession>C1FSR0</accession>
<proteinExistence type="inferred from homology"/>
<evidence type="ECO:0000255" key="1">
    <source>
        <dbReference type="HAMAP-Rule" id="MF_01539"/>
    </source>
</evidence>
<protein>
    <recommendedName>
        <fullName evidence="1">tRNA(Met) cytidine acetate ligase</fullName>
        <ecNumber evidence="1">6.3.4.-</ecNumber>
    </recommendedName>
</protein>
<reference key="1">
    <citation type="submission" date="2008-10" db="EMBL/GenBank/DDBJ databases">
        <title>Genome sequence of Clostridium botulinum A2 Kyoto.</title>
        <authorList>
            <person name="Shrivastava S."/>
            <person name="Brinkac L.M."/>
            <person name="Brown J.L."/>
            <person name="Bruce D."/>
            <person name="Detter C.C."/>
            <person name="Johnson E.A."/>
            <person name="Munk C.A."/>
            <person name="Smith L.A."/>
            <person name="Smith T.J."/>
            <person name="Sutton G."/>
            <person name="Brettin T.S."/>
        </authorList>
    </citation>
    <scope>NUCLEOTIDE SEQUENCE [LARGE SCALE GENOMIC DNA]</scope>
    <source>
        <strain>Kyoto / Type A2</strain>
    </source>
</reference>
<keyword id="KW-0067">ATP-binding</keyword>
<keyword id="KW-0963">Cytoplasm</keyword>
<keyword id="KW-0436">Ligase</keyword>
<keyword id="KW-0547">Nucleotide-binding</keyword>
<keyword id="KW-0694">RNA-binding</keyword>
<keyword id="KW-0819">tRNA processing</keyword>
<keyword id="KW-0820">tRNA-binding</keyword>
<sequence>MNVSAIVVEYNPMHNGHLYHIKKTKKLTNCDALVCIMSGNFVQRGFPSILDKWTKANIAISNGVDLVIELPTLYSLSSAEFFSFGAVSILDSLNIINSICFGSEIGNINALQDIATTLLEEPLEYKILLKNYLDKGISFAKARNLALVELNRDNKIMSENISKILSLSNNILGIEYLKSLLLLNSSIKPFTITREGADYKDENLHEEYSSASSIRKYLKENKNINILKDFLPLEGFLEFKRLITKGYNFSMEDSMINYIRYKYISGYKNLHNLIDVSEGLDNRIYKSLEKNFTYDSLVGEIKSKRYAYSRIGRILCQYFIGFENYDLNSLLKSTPNYMRVLASNEMGLKVLKKIKKHSSINIYTKLPKNTNTLLSLDIKATNAYSLLNNNIRFNEDYFRSPTIIKNTIY</sequence>
<organism>
    <name type="scientific">Clostridium botulinum (strain Kyoto / Type A2)</name>
    <dbReference type="NCBI Taxonomy" id="536232"/>
    <lineage>
        <taxon>Bacteria</taxon>
        <taxon>Bacillati</taxon>
        <taxon>Bacillota</taxon>
        <taxon>Clostridia</taxon>
        <taxon>Eubacteriales</taxon>
        <taxon>Clostridiaceae</taxon>
        <taxon>Clostridium</taxon>
    </lineage>
</organism>
<gene>
    <name evidence="1" type="primary">tmcAL</name>
    <name type="ordered locus">CLM_2790</name>
</gene>
<feature type="chain" id="PRO_1000185217" description="tRNA(Met) cytidine acetate ligase">
    <location>
        <begin position="1"/>
        <end position="409"/>
    </location>
</feature>
<feature type="binding site" evidence="1">
    <location>
        <begin position="7"/>
        <end position="20"/>
    </location>
    <ligand>
        <name>ATP</name>
        <dbReference type="ChEBI" id="CHEBI:30616"/>
    </ligand>
</feature>
<feature type="binding site" evidence="1">
    <location>
        <position position="102"/>
    </location>
    <ligand>
        <name>ATP</name>
        <dbReference type="ChEBI" id="CHEBI:30616"/>
    </ligand>
</feature>
<feature type="binding site" evidence="1">
    <location>
        <position position="169"/>
    </location>
    <ligand>
        <name>ATP</name>
        <dbReference type="ChEBI" id="CHEBI:30616"/>
    </ligand>
</feature>
<feature type="binding site" evidence="1">
    <location>
        <position position="194"/>
    </location>
    <ligand>
        <name>ATP</name>
        <dbReference type="ChEBI" id="CHEBI:30616"/>
    </ligand>
</feature>
<dbReference type="EC" id="6.3.4.-" evidence="1"/>
<dbReference type="EMBL" id="CP001581">
    <property type="protein sequence ID" value="ACO86937.1"/>
    <property type="molecule type" value="Genomic_DNA"/>
</dbReference>
<dbReference type="RefSeq" id="WP_012705595.1">
    <property type="nucleotide sequence ID" value="NC_012563.1"/>
</dbReference>
<dbReference type="SMR" id="C1FSR0"/>
<dbReference type="KEGG" id="cby:CLM_2790"/>
<dbReference type="eggNOG" id="COG1323">
    <property type="taxonomic scope" value="Bacteria"/>
</dbReference>
<dbReference type="HOGENOM" id="CLU_038915_0_1_9"/>
<dbReference type="Proteomes" id="UP000001374">
    <property type="component" value="Chromosome"/>
</dbReference>
<dbReference type="GO" id="GO:0005737">
    <property type="term" value="C:cytoplasm"/>
    <property type="evidence" value="ECO:0007669"/>
    <property type="project" value="UniProtKB-SubCell"/>
</dbReference>
<dbReference type="GO" id="GO:0005524">
    <property type="term" value="F:ATP binding"/>
    <property type="evidence" value="ECO:0007669"/>
    <property type="project" value="UniProtKB-KW"/>
</dbReference>
<dbReference type="GO" id="GO:0016879">
    <property type="term" value="F:ligase activity, forming carbon-nitrogen bonds"/>
    <property type="evidence" value="ECO:0007669"/>
    <property type="project" value="UniProtKB-UniRule"/>
</dbReference>
<dbReference type="GO" id="GO:0000049">
    <property type="term" value="F:tRNA binding"/>
    <property type="evidence" value="ECO:0007669"/>
    <property type="project" value="UniProtKB-KW"/>
</dbReference>
<dbReference type="GO" id="GO:0006400">
    <property type="term" value="P:tRNA modification"/>
    <property type="evidence" value="ECO:0007669"/>
    <property type="project" value="UniProtKB-UniRule"/>
</dbReference>
<dbReference type="Gene3D" id="3.40.50.620">
    <property type="entry name" value="HUPs"/>
    <property type="match status" value="1"/>
</dbReference>
<dbReference type="HAMAP" id="MF_01539">
    <property type="entry name" value="TmcAL"/>
    <property type="match status" value="1"/>
</dbReference>
<dbReference type="InterPro" id="IPR014729">
    <property type="entry name" value="Rossmann-like_a/b/a_fold"/>
</dbReference>
<dbReference type="InterPro" id="IPR008513">
    <property type="entry name" value="tRNA(Met)_cyd_acetate_ligase"/>
</dbReference>
<dbReference type="NCBIfam" id="NF010191">
    <property type="entry name" value="PRK13670.1"/>
    <property type="match status" value="1"/>
</dbReference>
<dbReference type="PANTHER" id="PTHR37825">
    <property type="entry name" value="TRNA(MET) CYTIDINE ACETATE LIGASE"/>
    <property type="match status" value="1"/>
</dbReference>
<dbReference type="PANTHER" id="PTHR37825:SF1">
    <property type="entry name" value="TRNA(MET) CYTIDINE ACETATE LIGASE"/>
    <property type="match status" value="1"/>
</dbReference>
<dbReference type="Pfam" id="PF05636">
    <property type="entry name" value="HIGH_NTase1"/>
    <property type="match status" value="1"/>
</dbReference>
<dbReference type="SUPFAM" id="SSF52374">
    <property type="entry name" value="Nucleotidylyl transferase"/>
    <property type="match status" value="1"/>
</dbReference>
<name>TMCAL_CLOBJ</name>
<comment type="function">
    <text evidence="1">Catalyzes the formation of N(4)-acetylcytidine (ac(4)C) at the wobble position of elongator tRNA(Met), using acetate and ATP as substrates. First activates an acetate ion to form acetyladenylate (Ac-AMP) and then transfers the acetyl group to tRNA to form ac(4)C34.</text>
</comment>
<comment type="catalytic activity">
    <reaction evidence="1">
        <text>cytidine(34) in elongator tRNA(Met) + acetate + ATP = N(4)-acetylcytidine(34) in elongator tRNA(Met) + AMP + diphosphate</text>
        <dbReference type="Rhea" id="RHEA:58144"/>
        <dbReference type="Rhea" id="RHEA-COMP:10693"/>
        <dbReference type="Rhea" id="RHEA-COMP:10694"/>
        <dbReference type="ChEBI" id="CHEBI:30089"/>
        <dbReference type="ChEBI" id="CHEBI:30616"/>
        <dbReference type="ChEBI" id="CHEBI:33019"/>
        <dbReference type="ChEBI" id="CHEBI:74900"/>
        <dbReference type="ChEBI" id="CHEBI:82748"/>
        <dbReference type="ChEBI" id="CHEBI:456215"/>
    </reaction>
</comment>
<comment type="subcellular location">
    <subcellularLocation>
        <location evidence="1">Cytoplasm</location>
    </subcellularLocation>
</comment>
<comment type="similarity">
    <text evidence="1">Belongs to the TmcAL family.</text>
</comment>